<keyword id="KW-0046">Antibiotic resistance</keyword>
<keyword id="KW-0997">Cell inner membrane</keyword>
<keyword id="KW-1003">Cell membrane</keyword>
<keyword id="KW-0133">Cell shape</keyword>
<keyword id="KW-0961">Cell wall biogenesis/degradation</keyword>
<keyword id="KW-0378">Hydrolase</keyword>
<keyword id="KW-0472">Membrane</keyword>
<keyword id="KW-0573">Peptidoglycan synthesis</keyword>
<keyword id="KW-0812">Transmembrane</keyword>
<keyword id="KW-1133">Transmembrane helix</keyword>
<proteinExistence type="inferred from homology"/>
<dbReference type="EC" id="3.6.1.27" evidence="1"/>
<dbReference type="EMBL" id="CP001157">
    <property type="protein sequence ID" value="ACO79044.1"/>
    <property type="molecule type" value="Genomic_DNA"/>
</dbReference>
<dbReference type="RefSeq" id="WP_012701431.1">
    <property type="nucleotide sequence ID" value="NC_012560.1"/>
</dbReference>
<dbReference type="SMR" id="C1DLV7"/>
<dbReference type="STRING" id="322710.Avin_28720"/>
<dbReference type="EnsemblBacteria" id="ACO79044">
    <property type="protein sequence ID" value="ACO79044"/>
    <property type="gene ID" value="Avin_28720"/>
</dbReference>
<dbReference type="GeneID" id="88185983"/>
<dbReference type="KEGG" id="avn:Avin_28720"/>
<dbReference type="eggNOG" id="COG1968">
    <property type="taxonomic scope" value="Bacteria"/>
</dbReference>
<dbReference type="HOGENOM" id="CLU_060296_2_0_6"/>
<dbReference type="OrthoDB" id="9808289at2"/>
<dbReference type="Proteomes" id="UP000002424">
    <property type="component" value="Chromosome"/>
</dbReference>
<dbReference type="GO" id="GO:0005886">
    <property type="term" value="C:plasma membrane"/>
    <property type="evidence" value="ECO:0007669"/>
    <property type="project" value="UniProtKB-SubCell"/>
</dbReference>
<dbReference type="GO" id="GO:0050380">
    <property type="term" value="F:undecaprenyl-diphosphatase activity"/>
    <property type="evidence" value="ECO:0007669"/>
    <property type="project" value="UniProtKB-UniRule"/>
</dbReference>
<dbReference type="GO" id="GO:0071555">
    <property type="term" value="P:cell wall organization"/>
    <property type="evidence" value="ECO:0007669"/>
    <property type="project" value="UniProtKB-KW"/>
</dbReference>
<dbReference type="GO" id="GO:0009252">
    <property type="term" value="P:peptidoglycan biosynthetic process"/>
    <property type="evidence" value="ECO:0007669"/>
    <property type="project" value="UniProtKB-KW"/>
</dbReference>
<dbReference type="GO" id="GO:0008360">
    <property type="term" value="P:regulation of cell shape"/>
    <property type="evidence" value="ECO:0007669"/>
    <property type="project" value="UniProtKB-KW"/>
</dbReference>
<dbReference type="GO" id="GO:0046677">
    <property type="term" value="P:response to antibiotic"/>
    <property type="evidence" value="ECO:0007669"/>
    <property type="project" value="UniProtKB-UniRule"/>
</dbReference>
<dbReference type="HAMAP" id="MF_01006">
    <property type="entry name" value="Undec_diphosphatase"/>
    <property type="match status" value="1"/>
</dbReference>
<dbReference type="InterPro" id="IPR003824">
    <property type="entry name" value="UppP"/>
</dbReference>
<dbReference type="NCBIfam" id="NF001389">
    <property type="entry name" value="PRK00281.1-2"/>
    <property type="match status" value="1"/>
</dbReference>
<dbReference type="NCBIfam" id="NF001390">
    <property type="entry name" value="PRK00281.1-4"/>
    <property type="match status" value="1"/>
</dbReference>
<dbReference type="NCBIfam" id="TIGR00753">
    <property type="entry name" value="undec_PP_bacA"/>
    <property type="match status" value="1"/>
</dbReference>
<dbReference type="PANTHER" id="PTHR30622">
    <property type="entry name" value="UNDECAPRENYL-DIPHOSPHATASE"/>
    <property type="match status" value="1"/>
</dbReference>
<dbReference type="PANTHER" id="PTHR30622:SF3">
    <property type="entry name" value="UNDECAPRENYL-DIPHOSPHATASE"/>
    <property type="match status" value="1"/>
</dbReference>
<dbReference type="Pfam" id="PF02673">
    <property type="entry name" value="BacA"/>
    <property type="match status" value="1"/>
</dbReference>
<accession>C1DLV7</accession>
<name>UPPP_AZOVD</name>
<evidence type="ECO:0000255" key="1">
    <source>
        <dbReference type="HAMAP-Rule" id="MF_01006"/>
    </source>
</evidence>
<reference key="1">
    <citation type="journal article" date="2009" name="J. Bacteriol.">
        <title>Genome sequence of Azotobacter vinelandii, an obligate aerobe specialized to support diverse anaerobic metabolic processes.</title>
        <authorList>
            <person name="Setubal J.C."/>
            <person name="Dos Santos P."/>
            <person name="Goldman B.S."/>
            <person name="Ertesvaag H."/>
            <person name="Espin G."/>
            <person name="Rubio L.M."/>
            <person name="Valla S."/>
            <person name="Almeida N.F."/>
            <person name="Balasubramanian D."/>
            <person name="Cromes L."/>
            <person name="Curatti L."/>
            <person name="Du Z."/>
            <person name="Godsy E."/>
            <person name="Goodner B."/>
            <person name="Hellner-Burris K."/>
            <person name="Hernandez J.A."/>
            <person name="Houmiel K."/>
            <person name="Imperial J."/>
            <person name="Kennedy C."/>
            <person name="Larson T.J."/>
            <person name="Latreille P."/>
            <person name="Ligon L.S."/>
            <person name="Lu J."/>
            <person name="Maerk M."/>
            <person name="Miller N.M."/>
            <person name="Norton S."/>
            <person name="O'Carroll I.P."/>
            <person name="Paulsen I."/>
            <person name="Raulfs E.C."/>
            <person name="Roemer R."/>
            <person name="Rosser J."/>
            <person name="Segura D."/>
            <person name="Slater S."/>
            <person name="Stricklin S.L."/>
            <person name="Studholme D.J."/>
            <person name="Sun J."/>
            <person name="Viana C.J."/>
            <person name="Wallin E."/>
            <person name="Wang B."/>
            <person name="Wheeler C."/>
            <person name="Zhu H."/>
            <person name="Dean D.R."/>
            <person name="Dixon R."/>
            <person name="Wood D."/>
        </authorList>
    </citation>
    <scope>NUCLEOTIDE SEQUENCE [LARGE SCALE GENOMIC DNA]</scope>
    <source>
        <strain>DJ / ATCC BAA-1303</strain>
    </source>
</reference>
<comment type="function">
    <text evidence="1">Catalyzes the dephosphorylation of undecaprenyl diphosphate (UPP). Confers resistance to bacitracin.</text>
</comment>
<comment type="catalytic activity">
    <reaction evidence="1">
        <text>di-trans,octa-cis-undecaprenyl diphosphate + H2O = di-trans,octa-cis-undecaprenyl phosphate + phosphate + H(+)</text>
        <dbReference type="Rhea" id="RHEA:28094"/>
        <dbReference type="ChEBI" id="CHEBI:15377"/>
        <dbReference type="ChEBI" id="CHEBI:15378"/>
        <dbReference type="ChEBI" id="CHEBI:43474"/>
        <dbReference type="ChEBI" id="CHEBI:58405"/>
        <dbReference type="ChEBI" id="CHEBI:60392"/>
        <dbReference type="EC" id="3.6.1.27"/>
    </reaction>
</comment>
<comment type="subcellular location">
    <subcellularLocation>
        <location evidence="1">Cell inner membrane</location>
        <topology evidence="1">Multi-pass membrane protein</topology>
    </subcellularLocation>
</comment>
<comment type="miscellaneous">
    <text>Bacitracin is thought to be involved in the inhibition of peptidoglycan synthesis by sequestering undecaprenyl diphosphate, thereby reducing the pool of lipid carrier available.</text>
</comment>
<comment type="similarity">
    <text evidence="1">Belongs to the UppP family.</text>
</comment>
<sequence length="277" mass="30221">MELWLAAQAFILGVVEGLTEFLPISSTGHQIIIADLIGFGGDRAKAFNIIIQLGAILAVVWEFREKVFGVILGLPREPQAQRFTVNLLIAFLPAVVLGVAFADLIEHWLFNPITVASALVVGGLVMLWAERRQHVIEVHAVDEMNWRHALKIGCAQCLAMIPGTSRSGSTIIGGLLFGLSRKAATEFSFFLAMPTMVGAAAYSGYKHRALFENGGDLPVFALGFVVSFIFAMLAVRGLLRFIASHSYALFAWYRIGFGLLILLTWQLGVVDWSTAQG</sequence>
<gene>
    <name evidence="1" type="primary">uppP</name>
    <name type="ordered locus">Avin_28720</name>
</gene>
<organism>
    <name type="scientific">Azotobacter vinelandii (strain DJ / ATCC BAA-1303)</name>
    <dbReference type="NCBI Taxonomy" id="322710"/>
    <lineage>
        <taxon>Bacteria</taxon>
        <taxon>Pseudomonadati</taxon>
        <taxon>Pseudomonadota</taxon>
        <taxon>Gammaproteobacteria</taxon>
        <taxon>Pseudomonadales</taxon>
        <taxon>Pseudomonadaceae</taxon>
        <taxon>Azotobacter</taxon>
    </lineage>
</organism>
<feature type="chain" id="PRO_1000213145" description="Undecaprenyl-diphosphatase">
    <location>
        <begin position="1"/>
        <end position="277"/>
    </location>
</feature>
<feature type="transmembrane region" description="Helical" evidence="1">
    <location>
        <begin position="53"/>
        <end position="73"/>
    </location>
</feature>
<feature type="transmembrane region" description="Helical" evidence="1">
    <location>
        <begin position="85"/>
        <end position="105"/>
    </location>
</feature>
<feature type="transmembrane region" description="Helical" evidence="1">
    <location>
        <begin position="108"/>
        <end position="128"/>
    </location>
</feature>
<feature type="transmembrane region" description="Helical" evidence="1">
    <location>
        <begin position="183"/>
        <end position="203"/>
    </location>
</feature>
<feature type="transmembrane region" description="Helical" evidence="1">
    <location>
        <begin position="215"/>
        <end position="235"/>
    </location>
</feature>
<feature type="transmembrane region" description="Helical" evidence="1">
    <location>
        <begin position="250"/>
        <end position="270"/>
    </location>
</feature>
<protein>
    <recommendedName>
        <fullName evidence="1">Undecaprenyl-diphosphatase</fullName>
        <ecNumber evidence="1">3.6.1.27</ecNumber>
    </recommendedName>
    <alternativeName>
        <fullName evidence="1">Bacitracin resistance protein</fullName>
    </alternativeName>
    <alternativeName>
        <fullName evidence="1">Undecaprenyl pyrophosphate phosphatase</fullName>
    </alternativeName>
</protein>